<reference key="1">
    <citation type="journal article" date="2004" name="Proc. Natl. Acad. Sci. U.S.A.">
        <title>The complete genomic sequence of Nocardia farcinica IFM 10152.</title>
        <authorList>
            <person name="Ishikawa J."/>
            <person name="Yamashita A."/>
            <person name="Mikami Y."/>
            <person name="Hoshino Y."/>
            <person name="Kurita H."/>
            <person name="Hotta K."/>
            <person name="Shiba T."/>
            <person name="Hattori M."/>
        </authorList>
    </citation>
    <scope>NUCLEOTIDE SEQUENCE [LARGE SCALE GENOMIC DNA]</scope>
    <source>
        <strain>IFM 10152</strain>
    </source>
</reference>
<keyword id="KW-0963">Cytoplasm</keyword>
<keyword id="KW-0227">DNA damage</keyword>
<keyword id="KW-0233">DNA recombination</keyword>
<keyword id="KW-0234">DNA repair</keyword>
<keyword id="KW-0238">DNA-binding</keyword>
<keyword id="KW-0255">Endonuclease</keyword>
<keyword id="KW-0378">Hydrolase</keyword>
<keyword id="KW-0460">Magnesium</keyword>
<keyword id="KW-0479">Metal-binding</keyword>
<keyword id="KW-0540">Nuclease</keyword>
<keyword id="KW-1185">Reference proteome</keyword>
<feature type="chain" id="PRO_0000225157" description="Crossover junction endodeoxyribonuclease RuvC">
    <location>
        <begin position="1"/>
        <end position="189"/>
    </location>
</feature>
<feature type="active site" evidence="1">
    <location>
        <position position="7"/>
    </location>
</feature>
<feature type="active site" evidence="1">
    <location>
        <position position="68"/>
    </location>
</feature>
<feature type="active site" evidence="1">
    <location>
        <position position="141"/>
    </location>
</feature>
<feature type="binding site" evidence="1">
    <location>
        <position position="7"/>
    </location>
    <ligand>
        <name>Mg(2+)</name>
        <dbReference type="ChEBI" id="CHEBI:18420"/>
        <label>1</label>
    </ligand>
</feature>
<feature type="binding site" evidence="1">
    <location>
        <position position="68"/>
    </location>
    <ligand>
        <name>Mg(2+)</name>
        <dbReference type="ChEBI" id="CHEBI:18420"/>
        <label>2</label>
    </ligand>
</feature>
<feature type="binding site" evidence="1">
    <location>
        <position position="141"/>
    </location>
    <ligand>
        <name>Mg(2+)</name>
        <dbReference type="ChEBI" id="CHEBI:18420"/>
        <label>1</label>
    </ligand>
</feature>
<sequence>MRVMGVDPGLTRCGLSMVEGGHGRTVTALDVDVVRTPADMDLAHRLMLVADAAEYWMDTHRPGAVAIERVFAQHNVRTAMGTAQAGGVIALAAARRDIPVVFHTPSEVKAAVTGNGNADKAQVTAMVTRILGLQTAPKPADAADALALAICHCWRAPLLARMAAAEAKAAEAKRRYTERLAEQRKAVRG</sequence>
<evidence type="ECO:0000255" key="1">
    <source>
        <dbReference type="HAMAP-Rule" id="MF_00034"/>
    </source>
</evidence>
<accession>Q5YTE6</accession>
<gene>
    <name evidence="1" type="primary">ruvC</name>
    <name type="ordered locus">NFA_36970</name>
</gene>
<proteinExistence type="inferred from homology"/>
<organism>
    <name type="scientific">Nocardia farcinica (strain IFM 10152)</name>
    <dbReference type="NCBI Taxonomy" id="247156"/>
    <lineage>
        <taxon>Bacteria</taxon>
        <taxon>Bacillati</taxon>
        <taxon>Actinomycetota</taxon>
        <taxon>Actinomycetes</taxon>
        <taxon>Mycobacteriales</taxon>
        <taxon>Nocardiaceae</taxon>
        <taxon>Nocardia</taxon>
    </lineage>
</organism>
<comment type="function">
    <text evidence="1">The RuvA-RuvB-RuvC complex processes Holliday junction (HJ) DNA during genetic recombination and DNA repair. Endonuclease that resolves HJ intermediates. Cleaves cruciform DNA by making single-stranded nicks across the HJ at symmetrical positions within the homologous arms, yielding a 5'-phosphate and a 3'-hydroxyl group; requires a central core of homology in the junction. The consensus cleavage sequence is 5'-(A/T)TT(C/G)-3'. Cleavage occurs on the 3'-side of the TT dinucleotide at the point of strand exchange. HJ branch migration catalyzed by RuvA-RuvB allows RuvC to scan DNA until it finds its consensus sequence, where it cleaves and resolves the cruciform DNA.</text>
</comment>
<comment type="catalytic activity">
    <reaction evidence="1">
        <text>Endonucleolytic cleavage at a junction such as a reciprocal single-stranded crossover between two homologous DNA duplexes (Holliday junction).</text>
        <dbReference type="EC" id="3.1.21.10"/>
    </reaction>
</comment>
<comment type="cofactor">
    <cofactor evidence="1">
        <name>Mg(2+)</name>
        <dbReference type="ChEBI" id="CHEBI:18420"/>
    </cofactor>
    <text evidence="1">Binds 2 Mg(2+) ion per subunit.</text>
</comment>
<comment type="subunit">
    <text evidence="1">Homodimer which binds Holliday junction (HJ) DNA. The HJ becomes 2-fold symmetrical on binding to RuvC with unstacked arms; it has a different conformation from HJ DNA in complex with RuvA. In the full resolvosome a probable DNA-RuvA(4)-RuvB(12)-RuvC(2) complex forms which resolves the HJ.</text>
</comment>
<comment type="subcellular location">
    <subcellularLocation>
        <location evidence="1">Cytoplasm</location>
    </subcellularLocation>
</comment>
<comment type="similarity">
    <text evidence="1">Belongs to the RuvC family.</text>
</comment>
<protein>
    <recommendedName>
        <fullName evidence="1">Crossover junction endodeoxyribonuclease RuvC</fullName>
        <ecNumber evidence="1">3.1.21.10</ecNumber>
    </recommendedName>
    <alternativeName>
        <fullName evidence="1">Holliday junction nuclease RuvC</fullName>
    </alternativeName>
    <alternativeName>
        <fullName evidence="1">Holliday junction resolvase RuvC</fullName>
    </alternativeName>
</protein>
<dbReference type="EC" id="3.1.21.10" evidence="1"/>
<dbReference type="EMBL" id="AP006618">
    <property type="protein sequence ID" value="BAD58545.1"/>
    <property type="molecule type" value="Genomic_DNA"/>
</dbReference>
<dbReference type="RefSeq" id="WP_011210230.1">
    <property type="nucleotide sequence ID" value="NC_006361.1"/>
</dbReference>
<dbReference type="SMR" id="Q5YTE6"/>
<dbReference type="STRING" id="247156.NFA_36970"/>
<dbReference type="GeneID" id="61134390"/>
<dbReference type="KEGG" id="nfa:NFA_36970"/>
<dbReference type="eggNOG" id="COG0817">
    <property type="taxonomic scope" value="Bacteria"/>
</dbReference>
<dbReference type="HOGENOM" id="CLU_091257_0_2_11"/>
<dbReference type="OrthoDB" id="9805499at2"/>
<dbReference type="Proteomes" id="UP000006820">
    <property type="component" value="Chromosome"/>
</dbReference>
<dbReference type="GO" id="GO:0005737">
    <property type="term" value="C:cytoplasm"/>
    <property type="evidence" value="ECO:0007669"/>
    <property type="project" value="UniProtKB-SubCell"/>
</dbReference>
<dbReference type="GO" id="GO:0048476">
    <property type="term" value="C:Holliday junction resolvase complex"/>
    <property type="evidence" value="ECO:0007669"/>
    <property type="project" value="UniProtKB-UniRule"/>
</dbReference>
<dbReference type="GO" id="GO:0008821">
    <property type="term" value="F:crossover junction DNA endonuclease activity"/>
    <property type="evidence" value="ECO:0007669"/>
    <property type="project" value="UniProtKB-UniRule"/>
</dbReference>
<dbReference type="GO" id="GO:0003677">
    <property type="term" value="F:DNA binding"/>
    <property type="evidence" value="ECO:0007669"/>
    <property type="project" value="UniProtKB-KW"/>
</dbReference>
<dbReference type="GO" id="GO:0000287">
    <property type="term" value="F:magnesium ion binding"/>
    <property type="evidence" value="ECO:0007669"/>
    <property type="project" value="UniProtKB-UniRule"/>
</dbReference>
<dbReference type="GO" id="GO:0006310">
    <property type="term" value="P:DNA recombination"/>
    <property type="evidence" value="ECO:0007669"/>
    <property type="project" value="UniProtKB-UniRule"/>
</dbReference>
<dbReference type="GO" id="GO:0006281">
    <property type="term" value="P:DNA repair"/>
    <property type="evidence" value="ECO:0007669"/>
    <property type="project" value="UniProtKB-UniRule"/>
</dbReference>
<dbReference type="CDD" id="cd16962">
    <property type="entry name" value="RuvC"/>
    <property type="match status" value="1"/>
</dbReference>
<dbReference type="FunFam" id="3.30.420.10:FF:000002">
    <property type="entry name" value="Crossover junction endodeoxyribonuclease RuvC"/>
    <property type="match status" value="1"/>
</dbReference>
<dbReference type="Gene3D" id="3.30.420.10">
    <property type="entry name" value="Ribonuclease H-like superfamily/Ribonuclease H"/>
    <property type="match status" value="1"/>
</dbReference>
<dbReference type="HAMAP" id="MF_00034">
    <property type="entry name" value="RuvC"/>
    <property type="match status" value="1"/>
</dbReference>
<dbReference type="InterPro" id="IPR012337">
    <property type="entry name" value="RNaseH-like_sf"/>
</dbReference>
<dbReference type="InterPro" id="IPR036397">
    <property type="entry name" value="RNaseH_sf"/>
</dbReference>
<dbReference type="InterPro" id="IPR020563">
    <property type="entry name" value="X-over_junc_endoDNase_Mg_BS"/>
</dbReference>
<dbReference type="InterPro" id="IPR002176">
    <property type="entry name" value="X-over_junc_endoDNase_RuvC"/>
</dbReference>
<dbReference type="NCBIfam" id="TIGR00228">
    <property type="entry name" value="ruvC"/>
    <property type="match status" value="1"/>
</dbReference>
<dbReference type="PANTHER" id="PTHR30194">
    <property type="entry name" value="CROSSOVER JUNCTION ENDODEOXYRIBONUCLEASE RUVC"/>
    <property type="match status" value="1"/>
</dbReference>
<dbReference type="PANTHER" id="PTHR30194:SF3">
    <property type="entry name" value="CROSSOVER JUNCTION ENDODEOXYRIBONUCLEASE RUVC"/>
    <property type="match status" value="1"/>
</dbReference>
<dbReference type="Pfam" id="PF02075">
    <property type="entry name" value="RuvC"/>
    <property type="match status" value="1"/>
</dbReference>
<dbReference type="PRINTS" id="PR00696">
    <property type="entry name" value="RSOLVASERUVC"/>
</dbReference>
<dbReference type="SUPFAM" id="SSF53098">
    <property type="entry name" value="Ribonuclease H-like"/>
    <property type="match status" value="1"/>
</dbReference>
<dbReference type="PROSITE" id="PS01321">
    <property type="entry name" value="RUVC"/>
    <property type="match status" value="1"/>
</dbReference>
<name>RUVC_NOCFA</name>